<organism>
    <name type="scientific">Shigella dysenteriae serotype 1 (strain Sd197)</name>
    <dbReference type="NCBI Taxonomy" id="300267"/>
    <lineage>
        <taxon>Bacteria</taxon>
        <taxon>Pseudomonadati</taxon>
        <taxon>Pseudomonadota</taxon>
        <taxon>Gammaproteobacteria</taxon>
        <taxon>Enterobacterales</taxon>
        <taxon>Enterobacteriaceae</taxon>
        <taxon>Shigella</taxon>
    </lineage>
</organism>
<feature type="chain" id="PRO_0000141879" description="3-isopropylmalate dehydratase small subunit">
    <location>
        <begin position="1"/>
        <end position="201"/>
    </location>
</feature>
<accession>Q32K23</accession>
<reference key="1">
    <citation type="journal article" date="2005" name="Nucleic Acids Res.">
        <title>Genome dynamics and diversity of Shigella species, the etiologic agents of bacillary dysentery.</title>
        <authorList>
            <person name="Yang F."/>
            <person name="Yang J."/>
            <person name="Zhang X."/>
            <person name="Chen L."/>
            <person name="Jiang Y."/>
            <person name="Yan Y."/>
            <person name="Tang X."/>
            <person name="Wang J."/>
            <person name="Xiong Z."/>
            <person name="Dong J."/>
            <person name="Xue Y."/>
            <person name="Zhu Y."/>
            <person name="Xu X."/>
            <person name="Sun L."/>
            <person name="Chen S."/>
            <person name="Nie H."/>
            <person name="Peng J."/>
            <person name="Xu J."/>
            <person name="Wang Y."/>
            <person name="Yuan Z."/>
            <person name="Wen Y."/>
            <person name="Yao Z."/>
            <person name="Shen Y."/>
            <person name="Qiang B."/>
            <person name="Hou Y."/>
            <person name="Yu J."/>
            <person name="Jin Q."/>
        </authorList>
    </citation>
    <scope>NUCLEOTIDE SEQUENCE [LARGE SCALE GENOMIC DNA]</scope>
    <source>
        <strain>Sd197</strain>
    </source>
</reference>
<evidence type="ECO:0000255" key="1">
    <source>
        <dbReference type="HAMAP-Rule" id="MF_01031"/>
    </source>
</evidence>
<gene>
    <name evidence="1" type="primary">leuD</name>
    <name type="ordered locus">SDY_0098</name>
</gene>
<protein>
    <recommendedName>
        <fullName evidence="1">3-isopropylmalate dehydratase small subunit</fullName>
        <ecNumber evidence="1">4.2.1.33</ecNumber>
    </recommendedName>
    <alternativeName>
        <fullName evidence="1">Alpha-IPM isomerase</fullName>
        <shortName evidence="1">IPMI</shortName>
    </alternativeName>
    <alternativeName>
        <fullName evidence="1">Isopropylmalate isomerase</fullName>
    </alternativeName>
</protein>
<comment type="function">
    <text evidence="1">Catalyzes the isomerization between 2-isopropylmalate and 3-isopropylmalate, via the formation of 2-isopropylmaleate.</text>
</comment>
<comment type="catalytic activity">
    <reaction evidence="1">
        <text>(2R,3S)-3-isopropylmalate = (2S)-2-isopropylmalate</text>
        <dbReference type="Rhea" id="RHEA:32287"/>
        <dbReference type="ChEBI" id="CHEBI:1178"/>
        <dbReference type="ChEBI" id="CHEBI:35121"/>
        <dbReference type="EC" id="4.2.1.33"/>
    </reaction>
</comment>
<comment type="pathway">
    <text evidence="1">Amino-acid biosynthesis; L-leucine biosynthesis; L-leucine from 3-methyl-2-oxobutanoate: step 2/4.</text>
</comment>
<comment type="subunit">
    <text evidence="1">Heterodimer of LeuC and LeuD.</text>
</comment>
<comment type="similarity">
    <text evidence="1">Belongs to the LeuD family. LeuD type 1 subfamily.</text>
</comment>
<name>LEUD_SHIDS</name>
<sequence>MAEKFIKHTGLVVPLDAANVDTDAIIPKQFLQKVTRTGFGAHLFNDWRFLDEKGQQPNPDFVLNFPQYQGASILLARENFGCGSSREHAPWALTDYGFKVVIAPSFADIFYGNSFNNQLLPVKLSDAEVDELFALVKANPGIHFDVDLEAQEVKAGEKTYRFTIDAFRRHCMMNGLDSIGLTLQHDDAIAAYEAKQPAFMR</sequence>
<proteinExistence type="inferred from homology"/>
<dbReference type="EC" id="4.2.1.33" evidence="1"/>
<dbReference type="EMBL" id="CP000034">
    <property type="protein sequence ID" value="ABB60334.1"/>
    <property type="molecule type" value="Genomic_DNA"/>
</dbReference>
<dbReference type="RefSeq" id="WP_000818229.1">
    <property type="nucleotide sequence ID" value="NC_007606.1"/>
</dbReference>
<dbReference type="RefSeq" id="YP_401823.1">
    <property type="nucleotide sequence ID" value="NC_007606.1"/>
</dbReference>
<dbReference type="SMR" id="Q32K23"/>
<dbReference type="STRING" id="300267.SDY_0098"/>
<dbReference type="EnsemblBacteria" id="ABB60334">
    <property type="protein sequence ID" value="ABB60334"/>
    <property type="gene ID" value="SDY_0098"/>
</dbReference>
<dbReference type="KEGG" id="sdy:SDY_0098"/>
<dbReference type="PATRIC" id="fig|300267.13.peg.117"/>
<dbReference type="HOGENOM" id="CLU_081378_0_3_6"/>
<dbReference type="UniPathway" id="UPA00048">
    <property type="reaction ID" value="UER00071"/>
</dbReference>
<dbReference type="Proteomes" id="UP000002716">
    <property type="component" value="Chromosome"/>
</dbReference>
<dbReference type="GO" id="GO:0009316">
    <property type="term" value="C:3-isopropylmalate dehydratase complex"/>
    <property type="evidence" value="ECO:0007669"/>
    <property type="project" value="InterPro"/>
</dbReference>
<dbReference type="GO" id="GO:0003861">
    <property type="term" value="F:3-isopropylmalate dehydratase activity"/>
    <property type="evidence" value="ECO:0007669"/>
    <property type="project" value="UniProtKB-UniRule"/>
</dbReference>
<dbReference type="GO" id="GO:0009098">
    <property type="term" value="P:L-leucine biosynthetic process"/>
    <property type="evidence" value="ECO:0007669"/>
    <property type="project" value="UniProtKB-UniRule"/>
</dbReference>
<dbReference type="CDD" id="cd01577">
    <property type="entry name" value="IPMI_Swivel"/>
    <property type="match status" value="1"/>
</dbReference>
<dbReference type="FunFam" id="3.20.19.10:FF:000003">
    <property type="entry name" value="3-isopropylmalate dehydratase small subunit"/>
    <property type="match status" value="1"/>
</dbReference>
<dbReference type="Gene3D" id="3.20.19.10">
    <property type="entry name" value="Aconitase, domain 4"/>
    <property type="match status" value="1"/>
</dbReference>
<dbReference type="HAMAP" id="MF_01031">
    <property type="entry name" value="LeuD_type1"/>
    <property type="match status" value="1"/>
</dbReference>
<dbReference type="InterPro" id="IPR004431">
    <property type="entry name" value="3-IsopropMal_deHydase_ssu"/>
</dbReference>
<dbReference type="InterPro" id="IPR015928">
    <property type="entry name" value="Aconitase/3IPM_dehydase_swvl"/>
</dbReference>
<dbReference type="InterPro" id="IPR000573">
    <property type="entry name" value="AconitaseA/IPMdHydase_ssu_swvl"/>
</dbReference>
<dbReference type="InterPro" id="IPR033940">
    <property type="entry name" value="IPMI_Swivel"/>
</dbReference>
<dbReference type="InterPro" id="IPR050075">
    <property type="entry name" value="LeuD"/>
</dbReference>
<dbReference type="NCBIfam" id="TIGR00171">
    <property type="entry name" value="leuD"/>
    <property type="match status" value="1"/>
</dbReference>
<dbReference type="NCBIfam" id="NF002458">
    <property type="entry name" value="PRK01641.1"/>
    <property type="match status" value="1"/>
</dbReference>
<dbReference type="PANTHER" id="PTHR43345:SF5">
    <property type="entry name" value="3-ISOPROPYLMALATE DEHYDRATASE SMALL SUBUNIT"/>
    <property type="match status" value="1"/>
</dbReference>
<dbReference type="PANTHER" id="PTHR43345">
    <property type="entry name" value="3-ISOPROPYLMALATE DEHYDRATASE SMALL SUBUNIT 2-RELATED-RELATED"/>
    <property type="match status" value="1"/>
</dbReference>
<dbReference type="Pfam" id="PF00694">
    <property type="entry name" value="Aconitase_C"/>
    <property type="match status" value="1"/>
</dbReference>
<dbReference type="SUPFAM" id="SSF52016">
    <property type="entry name" value="LeuD/IlvD-like"/>
    <property type="match status" value="1"/>
</dbReference>
<keyword id="KW-0028">Amino-acid biosynthesis</keyword>
<keyword id="KW-0100">Branched-chain amino acid biosynthesis</keyword>
<keyword id="KW-0432">Leucine biosynthesis</keyword>
<keyword id="KW-0456">Lyase</keyword>
<keyword id="KW-1185">Reference proteome</keyword>